<comment type="function">
    <text evidence="1">The surface protein (SU) attaches the virus to the host cell by binding to its receptor. This interaction triggers the refolding of the transmembrane protein (TM) and is thought to activate its fusogenic potential by unmasking its fusion peptide. Fusion occurs at the host cell plasma membrane (By similarity).</text>
</comment>
<comment type="function">
    <text evidence="1">The transmembrane protein (TM) acts as a class I viral fusion protein. Under the current model, the protein has at least 3 conformational states: pre-fusion native state, pre-hairpin intermediate state, and post-fusion hairpin state. During viral and target cell membrane fusion, the coiled coil regions (heptad repeats) assume a trimer-of-hairpins structure, positioning the fusion peptide in close proximity to the C-terminal region of the ectodomain. The formation of this structure appears to drive apposition and subsequent fusion of viral and target cell membranes. Membranes fusion leads to delivery of the nucleocapsid into the cytoplasm (By similarity).</text>
</comment>
<comment type="subunit">
    <text evidence="1">The mature envelope protein (Env) consists of a trimer of SU-TM heterodimers attached by noncovalent interactions or by a labile interchain disulfide bond.</text>
</comment>
<comment type="subcellular location">
    <molecule>Transmembrane protein</molecule>
    <subcellularLocation>
        <location evidence="1">Virion membrane</location>
        <topology evidence="1">Single-pass type I membrane protein</topology>
    </subcellularLocation>
    <subcellularLocation>
        <location evidence="1">Host cell membrane</location>
        <topology evidence="1">Single-pass type I membrane protein</topology>
    </subcellularLocation>
    <text evidence="1">It is probably concentrated at the site of budding and incorporated into the virions possibly by contacts between the cytoplasmic tail of Env and the N-terminus of Gag.</text>
</comment>
<comment type="subcellular location">
    <molecule>Surface protein</molecule>
    <subcellularLocation>
        <location evidence="1">Virion membrane</location>
        <topology evidence="1">Peripheral membrane protein</topology>
    </subcellularLocation>
    <subcellularLocation>
        <location evidence="1">Host cell membrane</location>
        <topology evidence="1">Peripheral membrane protein</topology>
    </subcellularLocation>
    <text evidence="1">The surface protein is not anchored to the viral envelope, but associates with the extravirion surface through its binding to TM. It is probably concentrated at the site of budding and incorporated into the virions possibly by contacts between the cytoplasmic tail of Env and the N-terminus of Gag (By similarity).</text>
</comment>
<comment type="PTM">
    <text evidence="1">Specific enzymatic cleavages in vivo yield mature proteins. Envelope glycoproteins are synthesized as an inactive precursor that is N-glycosylated and processed likely by host cell furin or by a furin-like protease in the Golgi to yield the mature SU and TM proteins. The cleavage site between SU and TM requires the minimal sequence [KR]-X-[KR]-R (By similarity).</text>
</comment>
<dbReference type="EMBL" id="X60725">
    <property type="protein sequence ID" value="CAA43131.1"/>
    <property type="molecule type" value="Genomic_DNA"/>
</dbReference>
<dbReference type="PIR" id="A45394">
    <property type="entry name" value="A45394"/>
</dbReference>
<dbReference type="GlyCosmos" id="Q03804">
    <property type="glycosylation" value="23 sites, No reported glycans"/>
</dbReference>
<dbReference type="GO" id="GO:0020002">
    <property type="term" value="C:host cell plasma membrane"/>
    <property type="evidence" value="ECO:0007669"/>
    <property type="project" value="UniProtKB-SubCell"/>
</dbReference>
<dbReference type="GO" id="GO:0016020">
    <property type="term" value="C:membrane"/>
    <property type="evidence" value="ECO:0007669"/>
    <property type="project" value="UniProtKB-KW"/>
</dbReference>
<dbReference type="GO" id="GO:0019031">
    <property type="term" value="C:viral envelope"/>
    <property type="evidence" value="ECO:0007669"/>
    <property type="project" value="UniProtKB-KW"/>
</dbReference>
<dbReference type="GO" id="GO:0055036">
    <property type="term" value="C:virion membrane"/>
    <property type="evidence" value="ECO:0007669"/>
    <property type="project" value="UniProtKB-SubCell"/>
</dbReference>
<dbReference type="GO" id="GO:0005198">
    <property type="term" value="F:structural molecule activity"/>
    <property type="evidence" value="ECO:0007669"/>
    <property type="project" value="InterPro"/>
</dbReference>
<dbReference type="GO" id="GO:0046718">
    <property type="term" value="P:symbiont entry into host cell"/>
    <property type="evidence" value="ECO:0007669"/>
    <property type="project" value="UniProtKB-KW"/>
</dbReference>
<dbReference type="GO" id="GO:0019062">
    <property type="term" value="P:virion attachment to host cell"/>
    <property type="evidence" value="ECO:0007669"/>
    <property type="project" value="UniProtKB-KW"/>
</dbReference>
<dbReference type="CDD" id="cd09909">
    <property type="entry name" value="HIV-1-like_HR1-HR2"/>
    <property type="match status" value="1"/>
</dbReference>
<dbReference type="InterPro" id="IPR018582">
    <property type="entry name" value="Envelope_glycop_lentivirus"/>
</dbReference>
<dbReference type="InterPro" id="IPR000328">
    <property type="entry name" value="GP41-like"/>
</dbReference>
<dbReference type="Pfam" id="PF09590">
    <property type="entry name" value="Env-gp36"/>
    <property type="match status" value="1"/>
</dbReference>
<protein>
    <recommendedName>
        <fullName>Envelope glycoprotein gp150</fullName>
    </recommendedName>
    <alternativeName>
        <fullName>Env polyprotein</fullName>
    </alternativeName>
    <component>
        <recommendedName>
            <fullName>Surface protein</fullName>
            <shortName>SU</shortName>
        </recommendedName>
        <alternativeName>
            <fullName>Glycoprotein 100</fullName>
            <shortName>gp100</shortName>
        </alternativeName>
    </component>
    <component>
        <recommendedName>
            <fullName>Transmembrane protein</fullName>
            <shortName>TM</shortName>
        </recommendedName>
        <alternativeName>
            <fullName>Glycoprotein 36</fullName>
            <shortName>gp36</shortName>
        </alternativeName>
    </component>
</protein>
<gene>
    <name type="primary">env</name>
</gene>
<evidence type="ECO:0000250" key="1"/>
<evidence type="ECO:0000255" key="2"/>
<organism>
    <name type="scientific">Feline immunodeficiency virus (strain UT-113)</name>
    <name type="common">FIV</name>
    <dbReference type="NCBI Taxonomy" id="36373"/>
    <lineage>
        <taxon>Viruses</taxon>
        <taxon>Riboviria</taxon>
        <taxon>Pararnavirae</taxon>
        <taxon>Artverviricota</taxon>
        <taxon>Revtraviricetes</taxon>
        <taxon>Ortervirales</taxon>
        <taxon>Retroviridae</taxon>
        <taxon>Orthoretrovirinae</taxon>
        <taxon>Lentivirus</taxon>
        <taxon>Feline immunodeficiency virus</taxon>
    </lineage>
</organism>
<organismHost>
    <name type="scientific">Felidae</name>
    <name type="common">cat family</name>
    <dbReference type="NCBI Taxonomy" id="9681"/>
</organismHost>
<accession>Q03804</accession>
<proteinExistence type="inferred from homology"/>
<feature type="chain" id="PRO_0000239535" description="Envelope glycoprotein gp150">
    <location>
        <begin position="1"/>
        <end position="856"/>
    </location>
</feature>
<feature type="chain" id="PRO_0000038723" description="Surface protein" evidence="1">
    <location>
        <begin position="1"/>
        <end position="611"/>
    </location>
</feature>
<feature type="chain" id="PRO_0000038724" description="Transmembrane protein" evidence="1">
    <location>
        <begin position="612"/>
        <end position="856"/>
    </location>
</feature>
<feature type="topological domain" description="Extracellular" evidence="2">
    <location>
        <begin position="1"/>
        <end position="785"/>
    </location>
</feature>
<feature type="transmembrane region" description="Helical" evidence="2">
    <location>
        <begin position="786"/>
        <end position="806"/>
    </location>
</feature>
<feature type="topological domain" description="Cytoplasmic" evidence="2">
    <location>
        <begin position="807"/>
        <end position="856"/>
    </location>
</feature>
<feature type="region of interest" description="Fusion peptide" evidence="2">
    <location>
        <begin position="616"/>
        <end position="636"/>
    </location>
</feature>
<feature type="region of interest" description="Immunosuppression" evidence="1">
    <location>
        <begin position="662"/>
        <end position="680"/>
    </location>
</feature>
<feature type="coiled-coil region" evidence="2">
    <location>
        <begin position="643"/>
        <end position="693"/>
    </location>
</feature>
<feature type="coiled-coil region" evidence="2">
    <location>
        <begin position="736"/>
        <end position="772"/>
    </location>
</feature>
<feature type="site" description="Cleavage; by host" evidence="1">
    <location>
        <begin position="611"/>
        <end position="612"/>
    </location>
</feature>
<feature type="glycosylation site" description="N-linked (GlcNAc...) asparagine; by host" evidence="2">
    <location>
        <position position="220"/>
    </location>
</feature>
<feature type="glycosylation site" description="N-linked (GlcNAc...) asparagine; by host" evidence="2">
    <location>
        <position position="258"/>
    </location>
</feature>
<feature type="glycosylation site" description="N-linked (GlcNAc...) asparagine; by host" evidence="2">
    <location>
        <position position="269"/>
    </location>
</feature>
<feature type="glycosylation site" description="N-linked (GlcNAc...) asparagine; by host" evidence="2">
    <location>
        <position position="274"/>
    </location>
</feature>
<feature type="glycosylation site" description="N-linked (GlcNAc...) asparagine; by host" evidence="2">
    <location>
        <position position="298"/>
    </location>
</feature>
<feature type="glycosylation site" description="N-linked (GlcNAc...) asparagine; by host" evidence="2">
    <location>
        <position position="330"/>
    </location>
</feature>
<feature type="glycosylation site" description="N-linked (GlcNAc...) asparagine; by host" evidence="2">
    <location>
        <position position="336"/>
    </location>
</feature>
<feature type="glycosylation site" description="N-linked (GlcNAc...) asparagine; by host" evidence="2">
    <location>
        <position position="342"/>
    </location>
</feature>
<feature type="glycosylation site" description="N-linked (GlcNAc...) asparagine; by host" evidence="2">
    <location>
        <position position="418"/>
    </location>
</feature>
<feature type="glycosylation site" description="N-linked (GlcNAc...) asparagine; by host" evidence="2">
    <location>
        <position position="422"/>
    </location>
</feature>
<feature type="glycosylation site" description="N-linked (GlcNAc...) asparagine; by host" evidence="2">
    <location>
        <position position="448"/>
    </location>
</feature>
<feature type="glycosylation site" description="N-linked (GlcNAc...) asparagine; by host" evidence="2">
    <location>
        <position position="469"/>
    </location>
</feature>
<feature type="glycosylation site" description="N-linked (GlcNAc...) asparagine; by host" evidence="2">
    <location>
        <position position="481"/>
    </location>
</feature>
<feature type="glycosylation site" description="N-linked (GlcNAc...) asparagine; by host" evidence="2">
    <location>
        <position position="499"/>
    </location>
</feature>
<feature type="glycosylation site" description="N-linked (GlcNAc...) asparagine; by host" evidence="2">
    <location>
        <position position="518"/>
    </location>
</feature>
<feature type="glycosylation site" description="N-linked (GlcNAc...) asparagine; by host" evidence="2">
    <location>
        <position position="531"/>
    </location>
</feature>
<feature type="glycosylation site" description="N-linked (GlcNAc...) asparagine; by host" evidence="2">
    <location>
        <position position="548"/>
    </location>
</feature>
<feature type="glycosylation site" description="N-linked (GlcNAc...) asparagine; by host" evidence="2">
    <location>
        <position position="551"/>
    </location>
</feature>
<feature type="glycosylation site" description="N-linked (GlcNAc...) asparagine; by host" evidence="2">
    <location>
        <position position="556"/>
    </location>
</feature>
<feature type="glycosylation site" description="N-linked (GlcNAc...) asparagine; by host" evidence="2">
    <location>
        <position position="717"/>
    </location>
</feature>
<feature type="glycosylation site" description="N-linked (GlcNAc...) asparagine; by host" evidence="2">
    <location>
        <position position="721"/>
    </location>
</feature>
<feature type="glycosylation site" description="N-linked (GlcNAc...) asparagine; by host" evidence="2">
    <location>
        <position position="729"/>
    </location>
</feature>
<feature type="glycosylation site" description="N-linked (GlcNAc...) asparagine; by host" evidence="2">
    <location>
        <position position="737"/>
    </location>
</feature>
<sequence length="856" mass="98476">MAEGFVANGQWIGPEEAEELVDFEIATQMNEEGPLNPGINPFRVPGITKQEKQEYCSTMQPKLQALRNEIQEVKLEEGNAGKFRRARFLRYSDETILSLIYLFIGYFRYLVDRKRFGSLRHDIDIEAPQEECYNNKEKGMTENIKYGKRCLVGTAALYLILAIGIIIIIRTTDAQVVWRLPPLVVPVEESEIIFWDCWAPEEPACQDFLGAMIHLKASTNISNTEGPTLGNWAREIWATLFKKATRQCRRGRIWKRWNETITGPIGCANNTCYNISVIVPDYQCYIDRVDTWLQGKVNISLCLTGGKMLYNKETKQLSYCTDPLQIPLINYTFGPNQTCMWNISQIQDPEIPKCGWWNQQAYYNNCKWERTDVKFQCQRTQSQPGSWIRAISSWKQGNRWEWRPDFESERVKVSLQCNSTRNLTFAMRSSGDYGEITGAWIEFGCHRNKSIRHNAARFRIRCRWNEGDNNSLIDTCGETQNVSGANPVDCTMYANKMYNCSLQDGFTMKVDDLIMHFNMTKAVEMYNIAGNWSCMSDLPTEWGYMNCNCTNDTSNNNTRKMKCPKENGILRNWYNPVAGLRQSLEKYQVVKQPDYLLVPEEVMEYKPRRKRAAIHVMLALATVLSMAGAGTGATAIGMVTQYHQVLATQQEAIEKVTEALKITNLRLVTLEHQVLVIGLKVEAMEKFLYTAFAMQELGCNQNQFFCKVPPELWRRYNMTINQTIWNHGNITLGEWYNQTKDLQKKFYGIIMDIEQNNVQGKKGLQQLQKWEDWVGWIGNIPQYLKGLLGSIVGIGLGILLLILCLPTLVDCIRNCIHKILGYTVIAMPEVDGEEIQPQMELRRNGRQCGMSEKEEE</sequence>
<keyword id="KW-0165">Cleavage on pair of basic residues</keyword>
<keyword id="KW-0175">Coiled coil</keyword>
<keyword id="KW-1015">Disulfide bond</keyword>
<keyword id="KW-0325">Glycoprotein</keyword>
<keyword id="KW-1032">Host cell membrane</keyword>
<keyword id="KW-1043">Host membrane</keyword>
<keyword id="KW-0945">Host-virus interaction</keyword>
<keyword id="KW-0472">Membrane</keyword>
<keyword id="KW-0812">Transmembrane</keyword>
<keyword id="KW-1133">Transmembrane helix</keyword>
<keyword id="KW-1161">Viral attachment to host cell</keyword>
<keyword id="KW-0261">Viral envelope protein</keyword>
<keyword id="KW-0946">Virion</keyword>
<keyword id="KW-1160">Virus entry into host cell</keyword>
<reference key="1">
    <citation type="journal article" date="1993" name="Virology">
        <title>Post-translational processing of the feline immunodeficiency virus envelope precursor protein.</title>
        <authorList>
            <person name="Verschoor E.J."/>
            <person name="Hulskotte E.G.J."/>
            <person name="Ederveen J."/>
            <person name="Koolen M.J.M."/>
            <person name="Horzinek M.C."/>
            <person name="Rottier P.J.M."/>
        </authorList>
    </citation>
    <scope>NUCLEOTIDE SEQUENCE [GENOMIC DNA]</scope>
</reference>
<name>ENV_FIVU1</name>